<protein>
    <recommendedName>
        <fullName evidence="1">Pyridoxine/pyridoxamine 5'-phosphate oxidase</fullName>
        <ecNumber evidence="1">1.4.3.5</ecNumber>
    </recommendedName>
    <alternativeName>
        <fullName evidence="1">PNP/PMP oxidase</fullName>
        <shortName evidence="1">PNPOx</shortName>
    </alternativeName>
    <alternativeName>
        <fullName evidence="1">Pyridoxal 5'-phosphate synthase</fullName>
    </alternativeName>
</protein>
<reference key="1">
    <citation type="submission" date="2008-08" db="EMBL/GenBank/DDBJ databases">
        <title>Complete sequence of Vibrio fischeri strain MJ11.</title>
        <authorList>
            <person name="Mandel M.J."/>
            <person name="Stabb E.V."/>
            <person name="Ruby E.G."/>
            <person name="Ferriera S."/>
            <person name="Johnson J."/>
            <person name="Kravitz S."/>
            <person name="Beeson K."/>
            <person name="Sutton G."/>
            <person name="Rogers Y.-H."/>
            <person name="Friedman R."/>
            <person name="Frazier M."/>
            <person name="Venter J.C."/>
        </authorList>
    </citation>
    <scope>NUCLEOTIDE SEQUENCE [LARGE SCALE GENOMIC DNA]</scope>
    <source>
        <strain>MJ11</strain>
    </source>
</reference>
<dbReference type="EC" id="1.4.3.5" evidence="1"/>
<dbReference type="EMBL" id="CP001133">
    <property type="protein sequence ID" value="ACH63649.1"/>
    <property type="molecule type" value="Genomic_DNA"/>
</dbReference>
<dbReference type="RefSeq" id="WP_011263950.1">
    <property type="nucleotide sequence ID" value="NC_011186.1"/>
</dbReference>
<dbReference type="SMR" id="B5EVT2"/>
<dbReference type="GeneID" id="54166482"/>
<dbReference type="KEGG" id="vfm:VFMJ11_A1255"/>
<dbReference type="HOGENOM" id="CLU_032263_2_2_6"/>
<dbReference type="UniPathway" id="UPA01068">
    <property type="reaction ID" value="UER00304"/>
</dbReference>
<dbReference type="UniPathway" id="UPA01068">
    <property type="reaction ID" value="UER00305"/>
</dbReference>
<dbReference type="Proteomes" id="UP000001857">
    <property type="component" value="Chromosome II"/>
</dbReference>
<dbReference type="GO" id="GO:0010181">
    <property type="term" value="F:FMN binding"/>
    <property type="evidence" value="ECO:0007669"/>
    <property type="project" value="UniProtKB-UniRule"/>
</dbReference>
<dbReference type="GO" id="GO:0004733">
    <property type="term" value="F:pyridoxamine phosphate oxidase activity"/>
    <property type="evidence" value="ECO:0007669"/>
    <property type="project" value="UniProtKB-UniRule"/>
</dbReference>
<dbReference type="GO" id="GO:0008615">
    <property type="term" value="P:pyridoxine biosynthetic process"/>
    <property type="evidence" value="ECO:0007669"/>
    <property type="project" value="UniProtKB-KW"/>
</dbReference>
<dbReference type="Gene3D" id="2.30.110.10">
    <property type="entry name" value="Electron Transport, Fmn-binding Protein, Chain A"/>
    <property type="match status" value="1"/>
</dbReference>
<dbReference type="HAMAP" id="MF_01629">
    <property type="entry name" value="PdxH"/>
    <property type="match status" value="1"/>
</dbReference>
<dbReference type="InterPro" id="IPR000659">
    <property type="entry name" value="Pyridox_Oxase"/>
</dbReference>
<dbReference type="InterPro" id="IPR019740">
    <property type="entry name" value="Pyridox_Oxase_CS"/>
</dbReference>
<dbReference type="InterPro" id="IPR011576">
    <property type="entry name" value="Pyridox_Oxase_N"/>
</dbReference>
<dbReference type="InterPro" id="IPR019576">
    <property type="entry name" value="Pyridoxamine_oxidase_dimer_C"/>
</dbReference>
<dbReference type="InterPro" id="IPR012349">
    <property type="entry name" value="Split_barrel_FMN-bd"/>
</dbReference>
<dbReference type="NCBIfam" id="TIGR00558">
    <property type="entry name" value="pdxH"/>
    <property type="match status" value="1"/>
</dbReference>
<dbReference type="NCBIfam" id="NF004231">
    <property type="entry name" value="PRK05679.1"/>
    <property type="match status" value="1"/>
</dbReference>
<dbReference type="PANTHER" id="PTHR10851:SF0">
    <property type="entry name" value="PYRIDOXINE-5'-PHOSPHATE OXIDASE"/>
    <property type="match status" value="1"/>
</dbReference>
<dbReference type="PANTHER" id="PTHR10851">
    <property type="entry name" value="PYRIDOXINE-5-PHOSPHATE OXIDASE"/>
    <property type="match status" value="1"/>
</dbReference>
<dbReference type="Pfam" id="PF10590">
    <property type="entry name" value="PNP_phzG_C"/>
    <property type="match status" value="1"/>
</dbReference>
<dbReference type="Pfam" id="PF01243">
    <property type="entry name" value="PNPOx_N"/>
    <property type="match status" value="1"/>
</dbReference>
<dbReference type="PIRSF" id="PIRSF000190">
    <property type="entry name" value="Pyd_amn-ph_oxd"/>
    <property type="match status" value="1"/>
</dbReference>
<dbReference type="SUPFAM" id="SSF50475">
    <property type="entry name" value="FMN-binding split barrel"/>
    <property type="match status" value="1"/>
</dbReference>
<dbReference type="PROSITE" id="PS01064">
    <property type="entry name" value="PYRIDOX_OXIDASE"/>
    <property type="match status" value="1"/>
</dbReference>
<evidence type="ECO:0000255" key="1">
    <source>
        <dbReference type="HAMAP-Rule" id="MF_01629"/>
    </source>
</evidence>
<feature type="chain" id="PRO_1000186345" description="Pyridoxine/pyridoxamine 5'-phosphate oxidase">
    <location>
        <begin position="1"/>
        <end position="211"/>
    </location>
</feature>
<feature type="binding site" evidence="1">
    <location>
        <begin position="7"/>
        <end position="10"/>
    </location>
    <ligand>
        <name>substrate</name>
    </ligand>
</feature>
<feature type="binding site" evidence="1">
    <location>
        <begin position="60"/>
        <end position="65"/>
    </location>
    <ligand>
        <name>FMN</name>
        <dbReference type="ChEBI" id="CHEBI:58210"/>
    </ligand>
</feature>
<feature type="binding site" evidence="1">
    <location>
        <position position="65"/>
    </location>
    <ligand>
        <name>substrate</name>
    </ligand>
</feature>
<feature type="binding site" evidence="1">
    <location>
        <begin position="75"/>
        <end position="76"/>
    </location>
    <ligand>
        <name>FMN</name>
        <dbReference type="ChEBI" id="CHEBI:58210"/>
    </ligand>
</feature>
<feature type="binding site" evidence="1">
    <location>
        <position position="81"/>
    </location>
    <ligand>
        <name>FMN</name>
        <dbReference type="ChEBI" id="CHEBI:58210"/>
    </ligand>
</feature>
<feature type="binding site" evidence="1">
    <location>
        <position position="82"/>
    </location>
    <ligand>
        <name>FMN</name>
        <dbReference type="ChEBI" id="CHEBI:58210"/>
    </ligand>
</feature>
<feature type="binding site" evidence="1">
    <location>
        <position position="104"/>
    </location>
    <ligand>
        <name>FMN</name>
        <dbReference type="ChEBI" id="CHEBI:58210"/>
    </ligand>
</feature>
<feature type="binding site" evidence="1">
    <location>
        <position position="122"/>
    </location>
    <ligand>
        <name>substrate</name>
    </ligand>
</feature>
<feature type="binding site" evidence="1">
    <location>
        <position position="126"/>
    </location>
    <ligand>
        <name>substrate</name>
    </ligand>
</feature>
<feature type="binding site" evidence="1">
    <location>
        <position position="130"/>
    </location>
    <ligand>
        <name>substrate</name>
    </ligand>
</feature>
<feature type="binding site" evidence="1">
    <location>
        <begin position="139"/>
        <end position="140"/>
    </location>
    <ligand>
        <name>FMN</name>
        <dbReference type="ChEBI" id="CHEBI:58210"/>
    </ligand>
</feature>
<feature type="binding site" evidence="1">
    <location>
        <position position="184"/>
    </location>
    <ligand>
        <name>FMN</name>
        <dbReference type="ChEBI" id="CHEBI:58210"/>
    </ligand>
</feature>
<feature type="binding site" evidence="1">
    <location>
        <begin position="190"/>
        <end position="192"/>
    </location>
    <ligand>
        <name>substrate</name>
    </ligand>
</feature>
<feature type="binding site" evidence="1">
    <location>
        <position position="194"/>
    </location>
    <ligand>
        <name>FMN</name>
        <dbReference type="ChEBI" id="CHEBI:58210"/>
    </ligand>
</feature>
<gene>
    <name evidence="1" type="primary">pdxH</name>
    <name type="ordered locus">VFMJ11_A1255</name>
</gene>
<name>PDXH_ALIFM</name>
<keyword id="KW-0285">Flavoprotein</keyword>
<keyword id="KW-0288">FMN</keyword>
<keyword id="KW-0560">Oxidoreductase</keyword>
<keyword id="KW-0664">Pyridoxine biosynthesis</keyword>
<accession>B5EVT2</accession>
<proteinExistence type="inferred from homology"/>
<sequence length="211" mass="24524">MELEDIRRDYSLGGLRRADLPQEPVELFELWLKQAVEAKLTDPTAMTVATVDENGQPFQRIVLLKHFDKTGFVFYTNLGSRKAQQLEQHSKISLHFPWHPLERQVHITGTAEKLTALENMKYFTSRPKESQIAAWASKQSSRLTARAALEGKYLELKQKFAKGEIPVPKFWGGFRIKIDSIEFWQGGDHRLHDRFLYSKDQNDWQIDRLAP</sequence>
<organism>
    <name type="scientific">Aliivibrio fischeri (strain MJ11)</name>
    <name type="common">Vibrio fischeri</name>
    <dbReference type="NCBI Taxonomy" id="388396"/>
    <lineage>
        <taxon>Bacteria</taxon>
        <taxon>Pseudomonadati</taxon>
        <taxon>Pseudomonadota</taxon>
        <taxon>Gammaproteobacteria</taxon>
        <taxon>Vibrionales</taxon>
        <taxon>Vibrionaceae</taxon>
        <taxon>Aliivibrio</taxon>
    </lineage>
</organism>
<comment type="function">
    <text evidence="1">Catalyzes the oxidation of either pyridoxine 5'-phosphate (PNP) or pyridoxamine 5'-phosphate (PMP) into pyridoxal 5'-phosphate (PLP).</text>
</comment>
<comment type="catalytic activity">
    <reaction evidence="1">
        <text>pyridoxamine 5'-phosphate + O2 + H2O = pyridoxal 5'-phosphate + H2O2 + NH4(+)</text>
        <dbReference type="Rhea" id="RHEA:15817"/>
        <dbReference type="ChEBI" id="CHEBI:15377"/>
        <dbReference type="ChEBI" id="CHEBI:15379"/>
        <dbReference type="ChEBI" id="CHEBI:16240"/>
        <dbReference type="ChEBI" id="CHEBI:28938"/>
        <dbReference type="ChEBI" id="CHEBI:58451"/>
        <dbReference type="ChEBI" id="CHEBI:597326"/>
        <dbReference type="EC" id="1.4.3.5"/>
    </reaction>
</comment>
<comment type="catalytic activity">
    <reaction evidence="1">
        <text>pyridoxine 5'-phosphate + O2 = pyridoxal 5'-phosphate + H2O2</text>
        <dbReference type="Rhea" id="RHEA:15149"/>
        <dbReference type="ChEBI" id="CHEBI:15379"/>
        <dbReference type="ChEBI" id="CHEBI:16240"/>
        <dbReference type="ChEBI" id="CHEBI:58589"/>
        <dbReference type="ChEBI" id="CHEBI:597326"/>
        <dbReference type="EC" id="1.4.3.5"/>
    </reaction>
</comment>
<comment type="cofactor">
    <cofactor evidence="1">
        <name>FMN</name>
        <dbReference type="ChEBI" id="CHEBI:58210"/>
    </cofactor>
    <text evidence="1">Binds 1 FMN per subunit.</text>
</comment>
<comment type="pathway">
    <text evidence="1">Cofactor metabolism; pyridoxal 5'-phosphate salvage; pyridoxal 5'-phosphate from pyridoxamine 5'-phosphate: step 1/1.</text>
</comment>
<comment type="pathway">
    <text evidence="1">Cofactor metabolism; pyridoxal 5'-phosphate salvage; pyridoxal 5'-phosphate from pyridoxine 5'-phosphate: step 1/1.</text>
</comment>
<comment type="subunit">
    <text evidence="1">Homodimer.</text>
</comment>
<comment type="similarity">
    <text evidence="1">Belongs to the pyridoxamine 5'-phosphate oxidase family.</text>
</comment>